<proteinExistence type="inferred from homology"/>
<protein>
    <recommendedName>
        <fullName>UPF0324 membrane protein Cgl0015/cg0018</fullName>
    </recommendedName>
</protein>
<organism>
    <name type="scientific">Corynebacterium glutamicum (strain ATCC 13032 / DSM 20300 / JCM 1318 / BCRC 11384 / CCUG 27702 / LMG 3730 / NBRC 12168 / NCIMB 10025 / NRRL B-2784 / 534)</name>
    <dbReference type="NCBI Taxonomy" id="196627"/>
    <lineage>
        <taxon>Bacteria</taxon>
        <taxon>Bacillati</taxon>
        <taxon>Actinomycetota</taxon>
        <taxon>Actinomycetes</taxon>
        <taxon>Mycobacteriales</taxon>
        <taxon>Corynebacteriaceae</taxon>
        <taxon>Corynebacterium</taxon>
    </lineage>
</organism>
<gene>
    <name type="ordered locus">Cgl0015</name>
    <name type="ordered locus">cg0018</name>
</gene>
<comment type="subcellular location">
    <subcellularLocation>
        <location evidence="2">Cell membrane</location>
        <topology evidence="2">Multi-pass membrane protein</topology>
    </subcellularLocation>
</comment>
<comment type="similarity">
    <text evidence="2">Belongs to the UPF0324 family.</text>
</comment>
<name>Y015_CORGL</name>
<reference key="1">
    <citation type="journal article" date="2003" name="Appl. Microbiol. Biotechnol.">
        <title>The Corynebacterium glutamicum genome: features and impacts on biotechnological processes.</title>
        <authorList>
            <person name="Ikeda M."/>
            <person name="Nakagawa S."/>
        </authorList>
    </citation>
    <scope>NUCLEOTIDE SEQUENCE [LARGE SCALE GENOMIC DNA]</scope>
    <source>
        <strain>ATCC 13032 / DSM 20300 / JCM 1318 / BCRC 11384 / CCUG 27702 / LMG 3730 / NBRC 12168 / NCIMB 10025 / NRRL B-2784 / 534</strain>
    </source>
</reference>
<reference key="2">
    <citation type="journal article" date="2003" name="J. Biotechnol.">
        <title>The complete Corynebacterium glutamicum ATCC 13032 genome sequence and its impact on the production of L-aspartate-derived amino acids and vitamins.</title>
        <authorList>
            <person name="Kalinowski J."/>
            <person name="Bathe B."/>
            <person name="Bartels D."/>
            <person name="Bischoff N."/>
            <person name="Bott M."/>
            <person name="Burkovski A."/>
            <person name="Dusch N."/>
            <person name="Eggeling L."/>
            <person name="Eikmanns B.J."/>
            <person name="Gaigalat L."/>
            <person name="Goesmann A."/>
            <person name="Hartmann M."/>
            <person name="Huthmacher K."/>
            <person name="Kraemer R."/>
            <person name="Linke B."/>
            <person name="McHardy A.C."/>
            <person name="Meyer F."/>
            <person name="Moeckel B."/>
            <person name="Pfefferle W."/>
            <person name="Puehler A."/>
            <person name="Rey D.A."/>
            <person name="Rueckert C."/>
            <person name="Rupp O."/>
            <person name="Sahm H."/>
            <person name="Wendisch V.F."/>
            <person name="Wiegraebe I."/>
            <person name="Tauch A."/>
        </authorList>
    </citation>
    <scope>NUCLEOTIDE SEQUENCE [LARGE SCALE GENOMIC DNA]</scope>
    <source>
        <strain>ATCC 13032 / DSM 20300 / JCM 1318 / BCRC 11384 / CCUG 27702 / LMG 3730 / NBRC 12168 / NCIMB 10025 / NRRL B-2784 / 534</strain>
    </source>
</reference>
<evidence type="ECO:0000255" key="1"/>
<evidence type="ECO:0000305" key="2"/>
<dbReference type="EMBL" id="BA000036">
    <property type="protein sequence ID" value="BAB97408.1"/>
    <property type="molecule type" value="Genomic_DNA"/>
</dbReference>
<dbReference type="EMBL" id="BX927148">
    <property type="protein sequence ID" value="CAF18580.1"/>
    <property type="molecule type" value="Genomic_DNA"/>
</dbReference>
<dbReference type="RefSeq" id="NP_599266.1">
    <property type="nucleotide sequence ID" value="NC_003450.3"/>
</dbReference>
<dbReference type="RefSeq" id="WP_011265442.1">
    <property type="nucleotide sequence ID" value="NC_006958.1"/>
</dbReference>
<dbReference type="STRING" id="196627.cg0018"/>
<dbReference type="KEGG" id="cgb:cg0018"/>
<dbReference type="KEGG" id="cgl:Cgl0015"/>
<dbReference type="PATRIC" id="fig|196627.13.peg.14"/>
<dbReference type="eggNOG" id="COG2855">
    <property type="taxonomic scope" value="Bacteria"/>
</dbReference>
<dbReference type="HOGENOM" id="CLU_033541_1_1_11"/>
<dbReference type="OrthoDB" id="9766798at2"/>
<dbReference type="BioCyc" id="CORYNE:G18NG-9557-MONOMER"/>
<dbReference type="Proteomes" id="UP000000582">
    <property type="component" value="Chromosome"/>
</dbReference>
<dbReference type="Proteomes" id="UP000001009">
    <property type="component" value="Chromosome"/>
</dbReference>
<dbReference type="GO" id="GO:0005886">
    <property type="term" value="C:plasma membrane"/>
    <property type="evidence" value="ECO:0007669"/>
    <property type="project" value="UniProtKB-SubCell"/>
</dbReference>
<dbReference type="InterPro" id="IPR018383">
    <property type="entry name" value="UPF0324_pro"/>
</dbReference>
<dbReference type="PANTHER" id="PTHR30106">
    <property type="entry name" value="INNER MEMBRANE PROTEIN YEIH-RELATED"/>
    <property type="match status" value="1"/>
</dbReference>
<dbReference type="PANTHER" id="PTHR30106:SF2">
    <property type="entry name" value="UPF0324 INNER MEMBRANE PROTEIN YEIH"/>
    <property type="match status" value="1"/>
</dbReference>
<dbReference type="Pfam" id="PF03601">
    <property type="entry name" value="Cons_hypoth698"/>
    <property type="match status" value="1"/>
</dbReference>
<keyword id="KW-1003">Cell membrane</keyword>
<keyword id="KW-0472">Membrane</keyword>
<keyword id="KW-1185">Reference proteome</keyword>
<keyword id="KW-0812">Transmembrane</keyword>
<keyword id="KW-1133">Transmembrane helix</keyword>
<accession>Q6M8W7</accession>
<accession>Q8NUC4</accession>
<sequence length="345" mass="35577">MSTNLLESTPPFTQLRTGVLQKYTPGLLLCSIAVLIAMIVNHFFSGVSPLIVAIILGIILTNLIQLPASTSPGITLASKKLLRLGIVFLGLQLVFSDILSLGFPMLAVIVCIVAGGIFGTILMGHLLRMKPTQVLLIACGFSICGAAAVAGVEGVTDSEEEEVVTAVALVVIFGTLMIPFIPFATKVLGLSPEIGGMWAGGSIHEIAQVVAAGGVIGGGALGVAVVVKLARVLLLAPIAAILSFRQRRQGYTSPDGKRPPVVPLFILGFLAMVVLRSTVALPDEVIAAGGFLQTALLSAAMFGLGCGVKIQNLIHVGVKPFILAFGSTTLVTSIALAGTLLTHLG</sequence>
<feature type="chain" id="PRO_0000157409" description="UPF0324 membrane protein Cgl0015/cg0018">
    <location>
        <begin position="1"/>
        <end position="345"/>
    </location>
</feature>
<feature type="transmembrane region" description="Helical" evidence="1">
    <location>
        <begin position="15"/>
        <end position="37"/>
    </location>
</feature>
<feature type="transmembrane region" description="Helical" evidence="1">
    <location>
        <begin position="44"/>
        <end position="66"/>
    </location>
</feature>
<feature type="transmembrane region" description="Helical" evidence="1">
    <location>
        <begin position="81"/>
        <end position="103"/>
    </location>
</feature>
<feature type="transmembrane region" description="Helical" evidence="1">
    <location>
        <begin position="105"/>
        <end position="124"/>
    </location>
</feature>
<feature type="transmembrane region" description="Helical" evidence="1">
    <location>
        <begin position="134"/>
        <end position="156"/>
    </location>
</feature>
<feature type="transmembrane region" description="Helical" evidence="1">
    <location>
        <begin position="163"/>
        <end position="185"/>
    </location>
</feature>
<feature type="transmembrane region" description="Helical" evidence="1">
    <location>
        <begin position="205"/>
        <end position="227"/>
    </location>
</feature>
<feature type="transmembrane region" description="Helical" evidence="1">
    <location>
        <begin position="261"/>
        <end position="280"/>
    </location>
</feature>
<feature type="transmembrane region" description="Helical" evidence="1">
    <location>
        <begin position="285"/>
        <end position="307"/>
    </location>
</feature>
<feature type="transmembrane region" description="Helical" evidence="1">
    <location>
        <begin position="320"/>
        <end position="342"/>
    </location>
</feature>